<sequence length="186" mass="21380">MLKTLVQLFLVVAGFAPGFGYDKYTTHIQNGNPYNLTVDMTPFIKINESYYVFGQTKVNWYVAYENCRRLQSELVTFETAEEFDAIAAFLNARGDRSEHWTSGNDLGKTGTHYWFSNAQLVTIKRWAPKQPDNAGGREHCIHLGYIYGYSTEFQLNDRPCHNHASSLFKYICEAPKQETVSIVVWK</sequence>
<organism evidence="12">
    <name type="scientific">Drosophila melanogaster</name>
    <name type="common">Fruit fly</name>
    <dbReference type="NCBI Taxonomy" id="7227"/>
    <lineage>
        <taxon>Eukaryota</taxon>
        <taxon>Metazoa</taxon>
        <taxon>Ecdysozoa</taxon>
        <taxon>Arthropoda</taxon>
        <taxon>Hexapoda</taxon>
        <taxon>Insecta</taxon>
        <taxon>Pterygota</taxon>
        <taxon>Neoptera</taxon>
        <taxon>Endopterygota</taxon>
        <taxon>Diptera</taxon>
        <taxon>Brachycera</taxon>
        <taxon>Muscomorpha</taxon>
        <taxon>Ephydroidea</taxon>
        <taxon>Drosophilidae</taxon>
        <taxon>Drosophila</taxon>
        <taxon>Sophophora</taxon>
    </lineage>
</organism>
<comment type="function">
    <text evidence="4 5">Galactose-specific lectin that displays calcium-dependent activity (PubMed:16475980, PubMed:17287021). Binds to the surface of hemocytes and enhances hemocyte encapsulation and melanization (PubMed:17287021). This is likely by interacting with carbohydrates on the surface of the hemocytes (PubMed:17287021). Also displays agglutination activity against the Gram-negative bacterium E.coli (PubMed:17287021).</text>
</comment>
<comment type="subcellular location">
    <subcellularLocation>
        <location evidence="4">Secreted</location>
    </subcellularLocation>
</comment>
<comment type="developmental stage">
    <text evidence="4">Detected in larvae and expressed from the late pupal stage onwards. Highest levels of expression in adults.</text>
</comment>
<name>LEDL2_DROME</name>
<evidence type="ECO:0000255" key="1"/>
<evidence type="ECO:0000255" key="2">
    <source>
        <dbReference type="PROSITE-ProRule" id="PRU00040"/>
    </source>
</evidence>
<evidence type="ECO:0000255" key="3">
    <source>
        <dbReference type="PROSITE-ProRule" id="PRU00498"/>
    </source>
</evidence>
<evidence type="ECO:0000269" key="4">
    <source>
    </source>
</evidence>
<evidence type="ECO:0000269" key="5">
    <source>
    </source>
</evidence>
<evidence type="ECO:0000303" key="6">
    <source>
    </source>
</evidence>
<evidence type="ECO:0000305" key="7"/>
<evidence type="ECO:0000312" key="8">
    <source>
        <dbReference type="EMBL" id="AAY55758.1"/>
    </source>
</evidence>
<evidence type="ECO:0000312" key="9">
    <source>
        <dbReference type="EMBL" id="AAY55802.1"/>
    </source>
</evidence>
<evidence type="ECO:0000312" key="10">
    <source>
        <dbReference type="EMBL" id="BAD51433.1"/>
    </source>
</evidence>
<evidence type="ECO:0000312" key="11">
    <source>
        <dbReference type="FlyBase" id="FBgn0053532"/>
    </source>
</evidence>
<evidence type="ECO:0000312" key="12">
    <source>
        <dbReference type="Proteomes" id="UP000000803"/>
    </source>
</evidence>
<dbReference type="EMBL" id="AE014134">
    <property type="protein sequence ID" value="AAX52669.1"/>
    <property type="molecule type" value="Genomic_DNA"/>
</dbReference>
<dbReference type="EMBL" id="AE014134">
    <property type="protein sequence ID" value="ADV37095.1"/>
    <property type="molecule type" value="Genomic_DNA"/>
</dbReference>
<dbReference type="EMBL" id="AB190811">
    <property type="protein sequence ID" value="BAD51433.1"/>
    <property type="molecule type" value="mRNA"/>
</dbReference>
<dbReference type="EMBL" id="BT023342">
    <property type="protein sequence ID" value="AAY55758.1"/>
    <property type="molecule type" value="mRNA"/>
</dbReference>
<dbReference type="EMBL" id="BT023386">
    <property type="protein sequence ID" value="AAY55802.1"/>
    <property type="molecule type" value="mRNA"/>
</dbReference>
<dbReference type="RefSeq" id="NP_001014489.1">
    <property type="nucleotide sequence ID" value="NM_001014489.2"/>
</dbReference>
<dbReference type="RefSeq" id="NP_001188846.1">
    <property type="nucleotide sequence ID" value="NM_001201917.1"/>
</dbReference>
<dbReference type="SMR" id="Q59DY6"/>
<dbReference type="FunCoup" id="Q59DY6">
    <property type="interactions" value="4"/>
</dbReference>
<dbReference type="STRING" id="7227.FBpp0099709"/>
<dbReference type="GlyCosmos" id="Q59DY6">
    <property type="glycosylation" value="2 sites, No reported glycans"/>
</dbReference>
<dbReference type="GlyGen" id="Q59DY6">
    <property type="glycosylation" value="2 sites"/>
</dbReference>
<dbReference type="PaxDb" id="7227-FBpp0099709"/>
<dbReference type="EnsemblMetazoa" id="FBtr0091498">
    <property type="protein sequence ID" value="FBpp0099709"/>
    <property type="gene ID" value="FBgn0053532"/>
</dbReference>
<dbReference type="EnsemblMetazoa" id="FBtr0302361">
    <property type="protein sequence ID" value="FBpp0291557"/>
    <property type="gene ID" value="FBgn0053532"/>
</dbReference>
<dbReference type="GeneID" id="3346222"/>
<dbReference type="KEGG" id="dme:Dmel_CG33532"/>
<dbReference type="UCSC" id="CG33532-RA">
    <property type="organism name" value="d. melanogaster"/>
</dbReference>
<dbReference type="AGR" id="FB:FBgn0053532"/>
<dbReference type="CTD" id="3346222"/>
<dbReference type="FlyBase" id="FBgn0053532">
    <property type="gene designation" value="lectin-37Da"/>
</dbReference>
<dbReference type="VEuPathDB" id="VectorBase:FBgn0053532"/>
<dbReference type="eggNOG" id="KOG4297">
    <property type="taxonomic scope" value="Eukaryota"/>
</dbReference>
<dbReference type="GeneTree" id="ENSGT00650000093533"/>
<dbReference type="HOGENOM" id="CLU_049894_13_2_1"/>
<dbReference type="InParanoid" id="Q59DY6"/>
<dbReference type="OMA" id="CHDDASS"/>
<dbReference type="OrthoDB" id="6340082at2759"/>
<dbReference type="PhylomeDB" id="Q59DY6"/>
<dbReference type="Reactome" id="R-DME-1236978">
    <property type="pathway name" value="Cross-presentation of soluble exogenous antigens (endosomes)"/>
</dbReference>
<dbReference type="Reactome" id="R-DME-446203">
    <property type="pathway name" value="Asparagine N-linked glycosylation"/>
</dbReference>
<dbReference type="Reactome" id="R-DME-5621480">
    <property type="pathway name" value="Dectin-2 family"/>
</dbReference>
<dbReference type="Reactome" id="R-DME-6798695">
    <property type="pathway name" value="Neutrophil degranulation"/>
</dbReference>
<dbReference type="BioGRID-ORCS" id="3346222">
    <property type="hits" value="0 hits in 1 CRISPR screen"/>
</dbReference>
<dbReference type="GenomeRNAi" id="3346222"/>
<dbReference type="PRO" id="PR:Q59DY6"/>
<dbReference type="Proteomes" id="UP000000803">
    <property type="component" value="Chromosome 2L"/>
</dbReference>
<dbReference type="Bgee" id="FBgn0053532">
    <property type="expression patterns" value="Expressed in midgut large flat cell (Drosophila) in digestive tract and 40 other cell types or tissues"/>
</dbReference>
<dbReference type="ExpressionAtlas" id="Q59DY6">
    <property type="expression patterns" value="baseline and differential"/>
</dbReference>
<dbReference type="GO" id="GO:0009897">
    <property type="term" value="C:external side of plasma membrane"/>
    <property type="evidence" value="ECO:0000318"/>
    <property type="project" value="GO_Central"/>
</dbReference>
<dbReference type="GO" id="GO:0005576">
    <property type="term" value="C:extracellular region"/>
    <property type="evidence" value="ECO:0000314"/>
    <property type="project" value="FlyBase"/>
</dbReference>
<dbReference type="GO" id="GO:0030246">
    <property type="term" value="F:carbohydrate binding"/>
    <property type="evidence" value="ECO:0000318"/>
    <property type="project" value="GO_Central"/>
</dbReference>
<dbReference type="GO" id="GO:0005534">
    <property type="term" value="F:galactose binding"/>
    <property type="evidence" value="ECO:0000314"/>
    <property type="project" value="FlyBase"/>
</dbReference>
<dbReference type="GO" id="GO:0046872">
    <property type="term" value="F:metal ion binding"/>
    <property type="evidence" value="ECO:0007669"/>
    <property type="project" value="UniProtKB-KW"/>
</dbReference>
<dbReference type="GO" id="GO:0038187">
    <property type="term" value="F:pattern recognition receptor activity"/>
    <property type="evidence" value="ECO:0000318"/>
    <property type="project" value="GO_Central"/>
</dbReference>
<dbReference type="GO" id="GO:0016339">
    <property type="term" value="P:calcium-dependent cell-cell adhesion via plasma membrane cell adhesion molecules"/>
    <property type="evidence" value="ECO:0000314"/>
    <property type="project" value="FlyBase"/>
</dbReference>
<dbReference type="GO" id="GO:0035010">
    <property type="term" value="P:encapsulation of foreign target"/>
    <property type="evidence" value="ECO:0000314"/>
    <property type="project" value="FlyBase"/>
</dbReference>
<dbReference type="GO" id="GO:0006955">
    <property type="term" value="P:immune response"/>
    <property type="evidence" value="ECO:0000318"/>
    <property type="project" value="GO_Central"/>
</dbReference>
<dbReference type="GO" id="GO:0035006">
    <property type="term" value="P:melanization defense response"/>
    <property type="evidence" value="ECO:0000314"/>
    <property type="project" value="FlyBase"/>
</dbReference>
<dbReference type="CDD" id="cd00037">
    <property type="entry name" value="CLECT"/>
    <property type="match status" value="1"/>
</dbReference>
<dbReference type="FunFam" id="3.10.100.10:FF:000123">
    <property type="entry name" value="C-type lectin 37Da"/>
    <property type="match status" value="1"/>
</dbReference>
<dbReference type="Gene3D" id="3.10.100.10">
    <property type="entry name" value="Mannose-Binding Protein A, subunit A"/>
    <property type="match status" value="1"/>
</dbReference>
<dbReference type="InterPro" id="IPR001304">
    <property type="entry name" value="C-type_lectin-like"/>
</dbReference>
<dbReference type="InterPro" id="IPR016186">
    <property type="entry name" value="C-type_lectin-like/link_sf"/>
</dbReference>
<dbReference type="InterPro" id="IPR050111">
    <property type="entry name" value="C-type_lectin/snaclec_domain"/>
</dbReference>
<dbReference type="InterPro" id="IPR016187">
    <property type="entry name" value="CTDL_fold"/>
</dbReference>
<dbReference type="PANTHER" id="PTHR22803">
    <property type="entry name" value="MANNOSE, PHOSPHOLIPASE, LECTIN RECEPTOR RELATED"/>
    <property type="match status" value="1"/>
</dbReference>
<dbReference type="Pfam" id="PF00059">
    <property type="entry name" value="Lectin_C"/>
    <property type="match status" value="1"/>
</dbReference>
<dbReference type="SMART" id="SM00034">
    <property type="entry name" value="CLECT"/>
    <property type="match status" value="1"/>
</dbReference>
<dbReference type="SUPFAM" id="SSF56436">
    <property type="entry name" value="C-type lectin-like"/>
    <property type="match status" value="1"/>
</dbReference>
<dbReference type="PROSITE" id="PS50041">
    <property type="entry name" value="C_TYPE_LECTIN_2"/>
    <property type="match status" value="1"/>
</dbReference>
<reference evidence="12" key="1">
    <citation type="journal article" date="2000" name="Science">
        <title>The genome sequence of Drosophila melanogaster.</title>
        <authorList>
            <person name="Adams M.D."/>
            <person name="Celniker S.E."/>
            <person name="Holt R.A."/>
            <person name="Evans C.A."/>
            <person name="Gocayne J.D."/>
            <person name="Amanatides P.G."/>
            <person name="Scherer S.E."/>
            <person name="Li P.W."/>
            <person name="Hoskins R.A."/>
            <person name="Galle R.F."/>
            <person name="George R.A."/>
            <person name="Lewis S.E."/>
            <person name="Richards S."/>
            <person name="Ashburner M."/>
            <person name="Henderson S.N."/>
            <person name="Sutton G.G."/>
            <person name="Wortman J.R."/>
            <person name="Yandell M.D."/>
            <person name="Zhang Q."/>
            <person name="Chen L.X."/>
            <person name="Brandon R.C."/>
            <person name="Rogers Y.-H.C."/>
            <person name="Blazej R.G."/>
            <person name="Champe M."/>
            <person name="Pfeiffer B.D."/>
            <person name="Wan K.H."/>
            <person name="Doyle C."/>
            <person name="Baxter E.G."/>
            <person name="Helt G."/>
            <person name="Nelson C.R."/>
            <person name="Miklos G.L.G."/>
            <person name="Abril J.F."/>
            <person name="Agbayani A."/>
            <person name="An H.-J."/>
            <person name="Andrews-Pfannkoch C."/>
            <person name="Baldwin D."/>
            <person name="Ballew R.M."/>
            <person name="Basu A."/>
            <person name="Baxendale J."/>
            <person name="Bayraktaroglu L."/>
            <person name="Beasley E.M."/>
            <person name="Beeson K.Y."/>
            <person name="Benos P.V."/>
            <person name="Berman B.P."/>
            <person name="Bhandari D."/>
            <person name="Bolshakov S."/>
            <person name="Borkova D."/>
            <person name="Botchan M.R."/>
            <person name="Bouck J."/>
            <person name="Brokstein P."/>
            <person name="Brottier P."/>
            <person name="Burtis K.C."/>
            <person name="Busam D.A."/>
            <person name="Butler H."/>
            <person name="Cadieu E."/>
            <person name="Center A."/>
            <person name="Chandra I."/>
            <person name="Cherry J.M."/>
            <person name="Cawley S."/>
            <person name="Dahlke C."/>
            <person name="Davenport L.B."/>
            <person name="Davies P."/>
            <person name="de Pablos B."/>
            <person name="Delcher A."/>
            <person name="Deng Z."/>
            <person name="Mays A.D."/>
            <person name="Dew I."/>
            <person name="Dietz S.M."/>
            <person name="Dodson K."/>
            <person name="Doup L.E."/>
            <person name="Downes M."/>
            <person name="Dugan-Rocha S."/>
            <person name="Dunkov B.C."/>
            <person name="Dunn P."/>
            <person name="Durbin K.J."/>
            <person name="Evangelista C.C."/>
            <person name="Ferraz C."/>
            <person name="Ferriera S."/>
            <person name="Fleischmann W."/>
            <person name="Fosler C."/>
            <person name="Gabrielian A.E."/>
            <person name="Garg N.S."/>
            <person name="Gelbart W.M."/>
            <person name="Glasser K."/>
            <person name="Glodek A."/>
            <person name="Gong F."/>
            <person name="Gorrell J.H."/>
            <person name="Gu Z."/>
            <person name="Guan P."/>
            <person name="Harris M."/>
            <person name="Harris N.L."/>
            <person name="Harvey D.A."/>
            <person name="Heiman T.J."/>
            <person name="Hernandez J.R."/>
            <person name="Houck J."/>
            <person name="Hostin D."/>
            <person name="Houston K.A."/>
            <person name="Howland T.J."/>
            <person name="Wei M.-H."/>
            <person name="Ibegwam C."/>
            <person name="Jalali M."/>
            <person name="Kalush F."/>
            <person name="Karpen G.H."/>
            <person name="Ke Z."/>
            <person name="Kennison J.A."/>
            <person name="Ketchum K.A."/>
            <person name="Kimmel B.E."/>
            <person name="Kodira C.D."/>
            <person name="Kraft C.L."/>
            <person name="Kravitz S."/>
            <person name="Kulp D."/>
            <person name="Lai Z."/>
            <person name="Lasko P."/>
            <person name="Lei Y."/>
            <person name="Levitsky A.A."/>
            <person name="Li J.H."/>
            <person name="Li Z."/>
            <person name="Liang Y."/>
            <person name="Lin X."/>
            <person name="Liu X."/>
            <person name="Mattei B."/>
            <person name="McIntosh T.C."/>
            <person name="McLeod M.P."/>
            <person name="McPherson D."/>
            <person name="Merkulov G."/>
            <person name="Milshina N.V."/>
            <person name="Mobarry C."/>
            <person name="Morris J."/>
            <person name="Moshrefi A."/>
            <person name="Mount S.M."/>
            <person name="Moy M."/>
            <person name="Murphy B."/>
            <person name="Murphy L."/>
            <person name="Muzny D.M."/>
            <person name="Nelson D.L."/>
            <person name="Nelson D.R."/>
            <person name="Nelson K.A."/>
            <person name="Nixon K."/>
            <person name="Nusskern D.R."/>
            <person name="Pacleb J.M."/>
            <person name="Palazzolo M."/>
            <person name="Pittman G.S."/>
            <person name="Pan S."/>
            <person name="Pollard J."/>
            <person name="Puri V."/>
            <person name="Reese M.G."/>
            <person name="Reinert K."/>
            <person name="Remington K."/>
            <person name="Saunders R.D.C."/>
            <person name="Scheeler F."/>
            <person name="Shen H."/>
            <person name="Shue B.C."/>
            <person name="Siden-Kiamos I."/>
            <person name="Simpson M."/>
            <person name="Skupski M.P."/>
            <person name="Smith T.J."/>
            <person name="Spier E."/>
            <person name="Spradling A.C."/>
            <person name="Stapleton M."/>
            <person name="Strong R."/>
            <person name="Sun E."/>
            <person name="Svirskas R."/>
            <person name="Tector C."/>
            <person name="Turner R."/>
            <person name="Venter E."/>
            <person name="Wang A.H."/>
            <person name="Wang X."/>
            <person name="Wang Z.-Y."/>
            <person name="Wassarman D.A."/>
            <person name="Weinstock G.M."/>
            <person name="Weissenbach J."/>
            <person name="Williams S.M."/>
            <person name="Woodage T."/>
            <person name="Worley K.C."/>
            <person name="Wu D."/>
            <person name="Yang S."/>
            <person name="Yao Q.A."/>
            <person name="Ye J."/>
            <person name="Yeh R.-F."/>
            <person name="Zaveri J.S."/>
            <person name="Zhan M."/>
            <person name="Zhang G."/>
            <person name="Zhao Q."/>
            <person name="Zheng L."/>
            <person name="Zheng X.H."/>
            <person name="Zhong F.N."/>
            <person name="Zhong W."/>
            <person name="Zhou X."/>
            <person name="Zhu S.C."/>
            <person name="Zhu X."/>
            <person name="Smith H.O."/>
            <person name="Gibbs R.A."/>
            <person name="Myers E.W."/>
            <person name="Rubin G.M."/>
            <person name="Venter J.C."/>
        </authorList>
    </citation>
    <scope>NUCLEOTIDE SEQUENCE [LARGE SCALE GENOMIC DNA]</scope>
    <source>
        <strain evidence="12">Berkeley</strain>
    </source>
</reference>
<reference evidence="12" key="2">
    <citation type="journal article" date="2002" name="Genome Biol.">
        <title>Annotation of the Drosophila melanogaster euchromatic genome: a systematic review.</title>
        <authorList>
            <person name="Misra S."/>
            <person name="Crosby M.A."/>
            <person name="Mungall C.J."/>
            <person name="Matthews B.B."/>
            <person name="Campbell K.S."/>
            <person name="Hradecky P."/>
            <person name="Huang Y."/>
            <person name="Kaminker J.S."/>
            <person name="Millburn G.H."/>
            <person name="Prochnik S.E."/>
            <person name="Smith C.D."/>
            <person name="Tupy J.L."/>
            <person name="Whitfield E.J."/>
            <person name="Bayraktaroglu L."/>
            <person name="Berman B.P."/>
            <person name="Bettencourt B.R."/>
            <person name="Celniker S.E."/>
            <person name="de Grey A.D.N.J."/>
            <person name="Drysdale R.A."/>
            <person name="Harris N.L."/>
            <person name="Richter J."/>
            <person name="Russo S."/>
            <person name="Schroeder A.J."/>
            <person name="Shu S.Q."/>
            <person name="Stapleton M."/>
            <person name="Yamada C."/>
            <person name="Ashburner M."/>
            <person name="Gelbart W.M."/>
            <person name="Rubin G.M."/>
            <person name="Lewis S.E."/>
        </authorList>
    </citation>
    <scope>GENOME REANNOTATION</scope>
    <source>
        <strain evidence="12">Berkeley</strain>
    </source>
</reference>
<reference evidence="10" key="3">
    <citation type="journal article" date="2006" name="Biochem. J.">
        <title>Participation of a galactose-specific C-type lectin in Drosophila immunity.</title>
        <authorList>
            <person name="Tanji T."/>
            <person name="Ohashi-Kobayashi A."/>
            <person name="Natori S."/>
        </authorList>
    </citation>
    <scope>NUCLEOTIDE SEQUENCE [MRNA] OF 3-186</scope>
    <scope>FUNCTION</scope>
    <scope>SUBCELLULAR LOCATION</scope>
    <scope>DEVELOPMENTAL STAGE</scope>
</reference>
<reference evidence="8 9" key="4">
    <citation type="submission" date="2005-05" db="EMBL/GenBank/DDBJ databases">
        <authorList>
            <person name="Stapleton M."/>
            <person name="Carlson J."/>
            <person name="Chavez C."/>
            <person name="Frise E."/>
            <person name="George R."/>
            <person name="Pacleb J."/>
            <person name="Park S."/>
            <person name="Wan K."/>
            <person name="Yu C."/>
            <person name="Celniker S."/>
        </authorList>
    </citation>
    <scope>NUCLEOTIDE SEQUENCE [LARGE SCALE MRNA] OF 3-186</scope>
</reference>
<reference evidence="7" key="5">
    <citation type="journal article" date="2007" name="Mol. Immunol.">
        <title>Drosophila C-type lectins enhance cellular encapsulation.</title>
        <authorList>
            <person name="Ao J."/>
            <person name="Ling E."/>
            <person name="Yu X.Q."/>
        </authorList>
    </citation>
    <scope>FUNCTION</scope>
</reference>
<accession>Q59DY6</accession>
<accession>Q4V3L4</accession>
<accession>Q65Y01</accession>
<protein>
    <recommendedName>
        <fullName evidence="7">C-type lectin 37Da</fullName>
    </recommendedName>
</protein>
<proteinExistence type="evidence at transcript level"/>
<feature type="signal peptide" evidence="1">
    <location>
        <begin position="1"/>
        <end position="20"/>
    </location>
</feature>
<feature type="chain" id="PRO_5007209829" description="C-type lectin 37Da">
    <location>
        <begin position="21"/>
        <end position="186"/>
    </location>
</feature>
<feature type="domain" description="C-type lectin" evidence="2">
    <location>
        <begin position="46"/>
        <end position="169"/>
    </location>
</feature>
<feature type="glycosylation site" description="N-linked (GlcNAc...) asparagine" evidence="3">
    <location>
        <position position="35"/>
    </location>
</feature>
<feature type="glycosylation site" description="N-linked (GlcNAc...) asparagine" evidence="3">
    <location>
        <position position="47"/>
    </location>
</feature>
<feature type="disulfide bond" evidence="2">
    <location>
        <begin position="140"/>
        <end position="160"/>
    </location>
</feature>
<keyword id="KW-0106">Calcium</keyword>
<keyword id="KW-1015">Disulfide bond</keyword>
<keyword id="KW-0325">Glycoprotein</keyword>
<keyword id="KW-0348">Hemagglutinin</keyword>
<keyword id="KW-0430">Lectin</keyword>
<keyword id="KW-0479">Metal-binding</keyword>
<keyword id="KW-1185">Reference proteome</keyword>
<keyword id="KW-0964">Secreted</keyword>
<keyword id="KW-0732">Signal</keyword>
<gene>
    <name evidence="11" type="primary">lectin-37Da</name>
    <name evidence="6" type="synonym">DL2</name>
    <name evidence="11" type="ORF">CG33532</name>
</gene>